<proteinExistence type="evidence at protein level"/>
<name>ACBG1_RAT</name>
<dbReference type="EC" id="6.2.1.3" evidence="5"/>
<dbReference type="EMBL" id="AF208125">
    <property type="protein sequence ID" value="AAG35729.1"/>
    <property type="molecule type" value="mRNA"/>
</dbReference>
<dbReference type="RefSeq" id="NP_599216.1">
    <property type="nucleotide sequence ID" value="NM_134389.1"/>
</dbReference>
<dbReference type="SMR" id="Q924N5"/>
<dbReference type="BioGRID" id="251236">
    <property type="interactions" value="3"/>
</dbReference>
<dbReference type="FunCoup" id="Q924N5">
    <property type="interactions" value="375"/>
</dbReference>
<dbReference type="STRING" id="10116.ENSRNOP00000074226"/>
<dbReference type="iPTMnet" id="Q924N5"/>
<dbReference type="PhosphoSitePlus" id="Q924N5"/>
<dbReference type="PaxDb" id="10116-ENSRNOP00000016104"/>
<dbReference type="GeneID" id="171410"/>
<dbReference type="KEGG" id="rno:171410"/>
<dbReference type="UCSC" id="RGD:708557">
    <property type="organism name" value="rat"/>
</dbReference>
<dbReference type="AGR" id="RGD:708557"/>
<dbReference type="CTD" id="23205"/>
<dbReference type="RGD" id="708557">
    <property type="gene designation" value="Acsbg1"/>
</dbReference>
<dbReference type="VEuPathDB" id="HostDB:ENSRNOG00000011381"/>
<dbReference type="eggNOG" id="KOG1256">
    <property type="taxonomic scope" value="Eukaryota"/>
</dbReference>
<dbReference type="InParanoid" id="Q924N5"/>
<dbReference type="OrthoDB" id="18612at9989"/>
<dbReference type="PhylomeDB" id="Q924N5"/>
<dbReference type="TreeFam" id="TF354286"/>
<dbReference type="BRENDA" id="6.2.1.3">
    <property type="organism ID" value="5301"/>
</dbReference>
<dbReference type="Reactome" id="R-RNO-75876">
    <property type="pathway name" value="Synthesis of very long-chain fatty acyl-CoAs"/>
</dbReference>
<dbReference type="PRO" id="PR:Q924N5"/>
<dbReference type="Proteomes" id="UP000002494">
    <property type="component" value="Chromosome 8"/>
</dbReference>
<dbReference type="Bgee" id="ENSRNOG00000011381">
    <property type="expression patterns" value="Expressed in ovary and 13 other cell types or tissues"/>
</dbReference>
<dbReference type="ExpressionAtlas" id="Q924N5">
    <property type="expression patterns" value="baseline and differential"/>
</dbReference>
<dbReference type="GO" id="GO:0005737">
    <property type="term" value="C:cytoplasm"/>
    <property type="evidence" value="ECO:0000266"/>
    <property type="project" value="RGD"/>
</dbReference>
<dbReference type="GO" id="GO:0031410">
    <property type="term" value="C:cytoplasmic vesicle"/>
    <property type="evidence" value="ECO:0007669"/>
    <property type="project" value="UniProtKB-KW"/>
</dbReference>
<dbReference type="GO" id="GO:0005783">
    <property type="term" value="C:endoplasmic reticulum"/>
    <property type="evidence" value="ECO:0000250"/>
    <property type="project" value="UniProtKB"/>
</dbReference>
<dbReference type="GO" id="GO:0005886">
    <property type="term" value="C:plasma membrane"/>
    <property type="evidence" value="ECO:0000250"/>
    <property type="project" value="UniProtKB"/>
</dbReference>
<dbReference type="GO" id="GO:0005524">
    <property type="term" value="F:ATP binding"/>
    <property type="evidence" value="ECO:0007669"/>
    <property type="project" value="UniProtKB-KW"/>
</dbReference>
<dbReference type="GO" id="GO:0004467">
    <property type="term" value="F:long-chain fatty acid-CoA ligase activity"/>
    <property type="evidence" value="ECO:0000250"/>
    <property type="project" value="HGNC-UCL"/>
</dbReference>
<dbReference type="GO" id="GO:0031957">
    <property type="term" value="F:very long-chain fatty acid-CoA ligase activity"/>
    <property type="evidence" value="ECO:0000250"/>
    <property type="project" value="HGNC-UCL"/>
</dbReference>
<dbReference type="GO" id="GO:0042759">
    <property type="term" value="P:long-chain fatty acid biosynthetic process"/>
    <property type="evidence" value="ECO:0000314"/>
    <property type="project" value="RGD"/>
</dbReference>
<dbReference type="GO" id="GO:0001676">
    <property type="term" value="P:long-chain fatty acid metabolic process"/>
    <property type="evidence" value="ECO:0000250"/>
    <property type="project" value="HGNC-UCL"/>
</dbReference>
<dbReference type="GO" id="GO:0001552">
    <property type="term" value="P:ovarian follicle atresia"/>
    <property type="evidence" value="ECO:0000270"/>
    <property type="project" value="RGD"/>
</dbReference>
<dbReference type="GO" id="GO:0051384">
    <property type="term" value="P:response to glucocorticoid"/>
    <property type="evidence" value="ECO:0000266"/>
    <property type="project" value="RGD"/>
</dbReference>
<dbReference type="GO" id="GO:0000038">
    <property type="term" value="P:very long-chain fatty acid metabolic process"/>
    <property type="evidence" value="ECO:0000250"/>
    <property type="project" value="HGNC-UCL"/>
</dbReference>
<dbReference type="CDD" id="cd05933">
    <property type="entry name" value="ACSBG_like"/>
    <property type="match status" value="1"/>
</dbReference>
<dbReference type="FunFam" id="3.40.50.12780:FF:000023">
    <property type="entry name" value="Long-chain-fatty-acid--CoA ligase ACSBG1 isoform 1"/>
    <property type="match status" value="1"/>
</dbReference>
<dbReference type="Gene3D" id="3.40.50.12780">
    <property type="entry name" value="N-terminal domain of ligase-like"/>
    <property type="match status" value="2"/>
</dbReference>
<dbReference type="InterPro" id="IPR020845">
    <property type="entry name" value="AMP-binding_CS"/>
</dbReference>
<dbReference type="InterPro" id="IPR000873">
    <property type="entry name" value="AMP-dep_synth/lig_dom"/>
</dbReference>
<dbReference type="InterPro" id="IPR042099">
    <property type="entry name" value="ANL_N_sf"/>
</dbReference>
<dbReference type="PANTHER" id="PTHR43272:SF93">
    <property type="entry name" value="ACYL-COA SYNTHETASE BUBBLEGUM FAMILY MEMBER 1"/>
    <property type="match status" value="1"/>
</dbReference>
<dbReference type="PANTHER" id="PTHR43272">
    <property type="entry name" value="LONG-CHAIN-FATTY-ACID--COA LIGASE"/>
    <property type="match status" value="1"/>
</dbReference>
<dbReference type="Pfam" id="PF00501">
    <property type="entry name" value="AMP-binding"/>
    <property type="match status" value="1"/>
</dbReference>
<dbReference type="Pfam" id="PF23562">
    <property type="entry name" value="AMP-binding_C_3"/>
    <property type="match status" value="1"/>
</dbReference>
<dbReference type="SUPFAM" id="SSF56801">
    <property type="entry name" value="Acetyl-CoA synthetase-like"/>
    <property type="match status" value="1"/>
</dbReference>
<dbReference type="PROSITE" id="PS00455">
    <property type="entry name" value="AMP_BINDING"/>
    <property type="match status" value="1"/>
</dbReference>
<organism>
    <name type="scientific">Rattus norvegicus</name>
    <name type="common">Rat</name>
    <dbReference type="NCBI Taxonomy" id="10116"/>
    <lineage>
        <taxon>Eukaryota</taxon>
        <taxon>Metazoa</taxon>
        <taxon>Chordata</taxon>
        <taxon>Craniata</taxon>
        <taxon>Vertebrata</taxon>
        <taxon>Euteleostomi</taxon>
        <taxon>Mammalia</taxon>
        <taxon>Eutheria</taxon>
        <taxon>Euarchontoglires</taxon>
        <taxon>Glires</taxon>
        <taxon>Rodentia</taxon>
        <taxon>Myomorpha</taxon>
        <taxon>Muroidea</taxon>
        <taxon>Muridae</taxon>
        <taxon>Murinae</taxon>
        <taxon>Rattus</taxon>
    </lineage>
</organism>
<protein>
    <recommendedName>
        <fullName evidence="7">Long-chain-fatty-acid--CoA ligase ACSBG1</fullName>
        <ecNumber evidence="5">6.2.1.3</ecNumber>
    </recommendedName>
    <alternativeName>
        <fullName>Acyl-CoA synthetase bubblegum family member 1</fullName>
    </alternativeName>
    <alternativeName>
        <fullName>Gonadotropin-regulated long chain acyl CoA synthetase</fullName>
        <shortName>GR-LACS</shortName>
    </alternativeName>
</protein>
<comment type="function">
    <text evidence="5">Catalyzes the conversion of fatty acids such as long-chain and very long-chain fatty acids to their active form acyl-CoAs for both synthesis of cellular lipids, and degradation via beta-oxidation. Can activate diverse saturated, monosaturated and polyunsaturated fatty acids.</text>
</comment>
<comment type="catalytic activity">
    <reaction evidence="5">
        <text>a long-chain fatty acid + ATP + CoA = a long-chain fatty acyl-CoA + AMP + diphosphate</text>
        <dbReference type="Rhea" id="RHEA:15421"/>
        <dbReference type="ChEBI" id="CHEBI:30616"/>
        <dbReference type="ChEBI" id="CHEBI:33019"/>
        <dbReference type="ChEBI" id="CHEBI:57287"/>
        <dbReference type="ChEBI" id="CHEBI:57560"/>
        <dbReference type="ChEBI" id="CHEBI:83139"/>
        <dbReference type="ChEBI" id="CHEBI:456215"/>
        <dbReference type="EC" id="6.2.1.3"/>
    </reaction>
</comment>
<comment type="catalytic activity">
    <reaction evidence="2">
        <text>(E)-hexadec-2-enoate + ATP + CoA = (2E)-hexadecenoyl-CoA + AMP + diphosphate</text>
        <dbReference type="Rhea" id="RHEA:36139"/>
        <dbReference type="ChEBI" id="CHEBI:30616"/>
        <dbReference type="ChEBI" id="CHEBI:33019"/>
        <dbReference type="ChEBI" id="CHEBI:57287"/>
        <dbReference type="ChEBI" id="CHEBI:61526"/>
        <dbReference type="ChEBI" id="CHEBI:72745"/>
        <dbReference type="ChEBI" id="CHEBI:456215"/>
    </reaction>
</comment>
<comment type="catalytic activity">
    <reaction evidence="2">
        <text>hexadecanoate + ATP + CoA = hexadecanoyl-CoA + AMP + diphosphate</text>
        <dbReference type="Rhea" id="RHEA:30751"/>
        <dbReference type="ChEBI" id="CHEBI:7896"/>
        <dbReference type="ChEBI" id="CHEBI:30616"/>
        <dbReference type="ChEBI" id="CHEBI:33019"/>
        <dbReference type="ChEBI" id="CHEBI:57287"/>
        <dbReference type="ChEBI" id="CHEBI:57379"/>
        <dbReference type="ChEBI" id="CHEBI:456215"/>
    </reaction>
</comment>
<comment type="subcellular location">
    <subcellularLocation>
        <location evidence="5">Cytoplasm</location>
    </subcellularLocation>
    <subcellularLocation>
        <location evidence="1">Cytoplasmic vesicle</location>
    </subcellularLocation>
    <subcellularLocation>
        <location evidence="1">Microsome</location>
    </subcellularLocation>
    <subcellularLocation>
        <location evidence="2">Endoplasmic reticulum</location>
    </subcellularLocation>
    <subcellularLocation>
        <location evidence="2">Cell membrane</location>
    </subcellularLocation>
</comment>
<comment type="tissue specificity">
    <text evidence="5 6">Present in testis, at a lower level in brain, and at a very low level in ovary. Not detected in other tissues. tested. Present in Leydig cells of the adult testis and to a lesser degree in the seminiferous tubules in spermatogonia and Sertoli cells (at protein level).</text>
</comment>
<comment type="induction">
    <text evidence="5">Down-regulated by gonadotropin.</text>
</comment>
<comment type="similarity">
    <text evidence="7">Belongs to the ATP-dependent AMP-binding enzyme family. Bubblegum subfamily.</text>
</comment>
<accession>Q924N5</accession>
<gene>
    <name evidence="8" type="primary">Acsbg1</name>
    <name type="synonym">Grlacs</name>
</gene>
<keyword id="KW-0067">ATP-binding</keyword>
<keyword id="KW-1003">Cell membrane</keyword>
<keyword id="KW-0963">Cytoplasm</keyword>
<keyword id="KW-0968">Cytoplasmic vesicle</keyword>
<keyword id="KW-0256">Endoplasmic reticulum</keyword>
<keyword id="KW-0276">Fatty acid metabolism</keyword>
<keyword id="KW-0436">Ligase</keyword>
<keyword id="KW-0443">Lipid metabolism</keyword>
<keyword id="KW-0472">Membrane</keyword>
<keyword id="KW-0492">Microsome</keyword>
<keyword id="KW-0547">Nucleotide-binding</keyword>
<keyword id="KW-0597">Phosphoprotein</keyword>
<keyword id="KW-1185">Reference proteome</keyword>
<evidence type="ECO:0000250" key="1"/>
<evidence type="ECO:0000250" key="2">
    <source>
        <dbReference type="UniProtKB" id="Q96GR2"/>
    </source>
</evidence>
<evidence type="ECO:0000250" key="3">
    <source>
        <dbReference type="UniProtKB" id="Q99PU5"/>
    </source>
</evidence>
<evidence type="ECO:0000256" key="4">
    <source>
        <dbReference type="SAM" id="MobiDB-lite"/>
    </source>
</evidence>
<evidence type="ECO:0000269" key="5">
    <source>
    </source>
</evidence>
<evidence type="ECO:0000269" key="6">
    <source>
    </source>
</evidence>
<evidence type="ECO:0000305" key="7"/>
<evidence type="ECO:0000312" key="8">
    <source>
        <dbReference type="RGD" id="708557"/>
    </source>
</evidence>
<evidence type="ECO:0007744" key="9">
    <source>
    </source>
</evidence>
<feature type="chain" id="PRO_0000315811" description="Long-chain-fatty-acid--CoA ligase ACSBG1">
    <location>
        <begin position="1"/>
        <end position="721"/>
    </location>
</feature>
<feature type="region of interest" description="Disordered" evidence="4">
    <location>
        <begin position="1"/>
        <end position="64"/>
    </location>
</feature>
<feature type="compositionally biased region" description="Polar residues" evidence="4">
    <location>
        <begin position="26"/>
        <end position="43"/>
    </location>
</feature>
<feature type="binding site" evidence="1">
    <location>
        <begin position="279"/>
        <end position="287"/>
    </location>
    <ligand>
        <name>ATP</name>
        <dbReference type="ChEBI" id="CHEBI:30616"/>
    </ligand>
</feature>
<feature type="binding site" evidence="1">
    <location>
        <begin position="469"/>
        <end position="474"/>
    </location>
    <ligand>
        <name>ATP</name>
        <dbReference type="ChEBI" id="CHEBI:30616"/>
    </ligand>
</feature>
<feature type="binding site" evidence="1">
    <location>
        <position position="547"/>
    </location>
    <ligand>
        <name>ATP</name>
        <dbReference type="ChEBI" id="CHEBI:30616"/>
    </ligand>
</feature>
<feature type="binding site" evidence="1">
    <location>
        <position position="562"/>
    </location>
    <ligand>
        <name>ATP</name>
        <dbReference type="ChEBI" id="CHEBI:30616"/>
    </ligand>
</feature>
<feature type="binding site" evidence="1">
    <location>
        <position position="698"/>
    </location>
    <ligand>
        <name>ATP</name>
        <dbReference type="ChEBI" id="CHEBI:30616"/>
    </ligand>
</feature>
<feature type="modified residue" description="Phosphoserine" evidence="9">
    <location>
        <position position="34"/>
    </location>
</feature>
<feature type="modified residue" description="Phosphoserine" evidence="9">
    <location>
        <position position="50"/>
    </location>
</feature>
<feature type="modified residue" description="Phosphoserine" evidence="9">
    <location>
        <position position="53"/>
    </location>
</feature>
<feature type="modified residue" description="Phosphoserine" evidence="9">
    <location>
        <position position="70"/>
    </location>
</feature>
<feature type="modified residue" description="Phosphotyrosine" evidence="3">
    <location>
        <position position="655"/>
    </location>
</feature>
<sequence length="721" mass="80519">MPRSSEAGYCCLSRDSNMPDSRDDQQQGASMGTSPDNSQTSSLIDGRTLSKESPSHGLELSAPEKARAASLDASEEALWTTRADGRVRLRLEPFCTQLPYTVHQMFYEALDKYGNLSALGFKRKDKWERISYYQYYLIARKVAKGFLKLGLERAHSVAILGFNSPEWFFSAVGTVFAGGIVTGIYTTSSPEACQYIAHDCRANVIVVDTQKQLEKILKIWKDLPHLKAVVIYQEPPPKKMANVYTMEELIELGQEVPEEALDAIIDTQQPNQCCVLVYTSGTTGNPKGVMLSQDNITWTARYGSQAGDIQPAEVQQEVVVSYLPLSHIAAQIYDLWTGIQWGAQVCFADPDALKGTLVNTLREVEPTSHMGVPRVWEKIMERIQEVAAQSGFIRRKMLLWAMSVTLEQNLTCPSNDLKPFTSRLADYLVLARVRQALGFAKCQKNFYGAAPMTAETQRFFLGLNIRLYAGYGLSESTGPHFMSSPYNYRLYSSGRVVPGCRVKLVNQDADGIGEICLWGRTIFMGYLNMEDKTHEAIDSEGWLHTGDMGRLDDDGFLYITGRLKELIITAGGENVPPVPIEEAVKMELPIISSAMLIGDQRKFLSMLLTLKCTLNPETSEPTDNLTEQAVEFCQRVGSKASTVSEIVGQKDEAVYQAIHEGIQRVNANAAARPYHIQKWAILERDFSISGGELGPTMKLKRLTVLEKYKDIIDSFYQEQKQ</sequence>
<reference key="1">
    <citation type="journal article" date="2001" name="Proc. Natl. Acad. Sci. U.S.A.">
        <title>Cloning and characterization of a hormonally regulated rat long chain acyl-CoA synthetase.</title>
        <authorList>
            <person name="Tang P.-Z."/>
            <person name="Tsai-Morris C.-H."/>
            <person name="Dufau M.L."/>
        </authorList>
    </citation>
    <scope>NUCLEOTIDE SEQUENCE [MRNA]</scope>
    <scope>FUNCTION</scope>
    <scope>ENZYME ACTIVITY</scope>
    <scope>SUBCELLULAR LOCATION</scope>
    <scope>TISSUE SPECIFICITY</scope>
    <scope>INDUCTION</scope>
</reference>
<reference key="2">
    <citation type="journal article" date="2006" name="J. Steroid Biochem. Mol. Biol.">
        <title>Tissue-cell- and species-specific expression of gonadotropin-regulated long chain acyl-CoA synthetase (GR-LACS) in gonads, adrenal and brain. Identification of novel forms in the brain.</title>
        <authorList>
            <person name="Li J."/>
            <person name="Sheng Y."/>
            <person name="Tang P.-Z."/>
            <person name="Tsai-Morris C.-H."/>
            <person name="Dufau M.L."/>
        </authorList>
    </citation>
    <scope>TISSUE SPECIFICITY</scope>
</reference>
<reference key="3">
    <citation type="journal article" date="2012" name="Nat. Commun.">
        <title>Quantitative maps of protein phosphorylation sites across 14 different rat organs and tissues.</title>
        <authorList>
            <person name="Lundby A."/>
            <person name="Secher A."/>
            <person name="Lage K."/>
            <person name="Nordsborg N.B."/>
            <person name="Dmytriyev A."/>
            <person name="Lundby C."/>
            <person name="Olsen J.V."/>
        </authorList>
    </citation>
    <scope>PHOSPHORYLATION [LARGE SCALE ANALYSIS] AT SER-34; SER-50; SER-53 AND SER-70</scope>
    <scope>IDENTIFICATION BY MASS SPECTROMETRY [LARGE SCALE ANALYSIS]</scope>
</reference>